<feature type="chain" id="PRO_0000210417" description="Diadenylate cyclase">
    <location>
        <begin position="1"/>
        <end position="200"/>
    </location>
</feature>
<feature type="transmembrane region" description="Helical" evidence="1">
    <location>
        <begin position="5"/>
        <end position="25"/>
    </location>
</feature>
<feature type="domain" description="DAC" evidence="1">
    <location>
        <begin position="28"/>
        <end position="185"/>
    </location>
</feature>
<keyword id="KW-0067">ATP-binding</keyword>
<keyword id="KW-1003">Cell membrane</keyword>
<keyword id="KW-0472">Membrane</keyword>
<keyword id="KW-0547">Nucleotide-binding</keyword>
<keyword id="KW-0548">Nucleotidyltransferase</keyword>
<keyword id="KW-1185">Reference proteome</keyword>
<keyword id="KW-0808">Transferase</keyword>
<keyword id="KW-0812">Transmembrane</keyword>
<keyword id="KW-1133">Transmembrane helix</keyword>
<sequence>MVVNILLFITLIFLLLLFVFLIAFAFLNKRVRNYVVRTWTSVFSKSKQNLDKKNFFDNLTSTLLRLSVDKIGAIIAIEKRDSLDPYINIGYRVSSDFSPELLVTIFYNKSSPLHDGAVIVRDYKIISVSSYFPMTRQLIDVSYGSRHRSALGLSEKSDAVVFIVSETTGKISVALKGVIKTLSSNSDRLQDEIIHYLSSK</sequence>
<proteinExistence type="inferred from homology"/>
<dbReference type="EC" id="2.7.7.85" evidence="1"/>
<dbReference type="EMBL" id="L43967">
    <property type="protein sequence ID" value="AAC71323.2"/>
    <property type="molecule type" value="Genomic_DNA"/>
</dbReference>
<dbReference type="PIR" id="F64211">
    <property type="entry name" value="F64211"/>
</dbReference>
<dbReference type="RefSeq" id="WP_009885663.1">
    <property type="nucleotide sequence ID" value="NC_000908.2"/>
</dbReference>
<dbReference type="SMR" id="P47351"/>
<dbReference type="FunCoup" id="P47351">
    <property type="interactions" value="1"/>
</dbReference>
<dbReference type="STRING" id="243273.MG_105"/>
<dbReference type="GeneID" id="88282229"/>
<dbReference type="KEGG" id="mge:MG_105"/>
<dbReference type="eggNOG" id="COG1624">
    <property type="taxonomic scope" value="Bacteria"/>
</dbReference>
<dbReference type="HOGENOM" id="CLU_038561_2_0_14"/>
<dbReference type="InParanoid" id="P47351"/>
<dbReference type="OrthoDB" id="9807385at2"/>
<dbReference type="Proteomes" id="UP000000807">
    <property type="component" value="Chromosome"/>
</dbReference>
<dbReference type="GO" id="GO:0005886">
    <property type="term" value="C:plasma membrane"/>
    <property type="evidence" value="ECO:0007669"/>
    <property type="project" value="UniProtKB-SubCell"/>
</dbReference>
<dbReference type="GO" id="GO:0004016">
    <property type="term" value="F:adenylate cyclase activity"/>
    <property type="evidence" value="ECO:0000318"/>
    <property type="project" value="GO_Central"/>
</dbReference>
<dbReference type="GO" id="GO:0005524">
    <property type="term" value="F:ATP binding"/>
    <property type="evidence" value="ECO:0007669"/>
    <property type="project" value="UniProtKB-UniRule"/>
</dbReference>
<dbReference type="GO" id="GO:0106408">
    <property type="term" value="F:diadenylate cyclase activity"/>
    <property type="evidence" value="ECO:0007669"/>
    <property type="project" value="UniProtKB-EC"/>
</dbReference>
<dbReference type="GO" id="GO:0006171">
    <property type="term" value="P:cAMP biosynthetic process"/>
    <property type="evidence" value="ECO:0007669"/>
    <property type="project" value="InterPro"/>
</dbReference>
<dbReference type="Gene3D" id="3.40.1700.10">
    <property type="entry name" value="DNA integrity scanning protein, DisA, N-terminal domain"/>
    <property type="match status" value="1"/>
</dbReference>
<dbReference type="HAMAP" id="MF_00838">
    <property type="entry name" value="DacB"/>
    <property type="match status" value="1"/>
</dbReference>
<dbReference type="InterPro" id="IPR014046">
    <property type="entry name" value="C-di-AMP_synthase"/>
</dbReference>
<dbReference type="InterPro" id="IPR034701">
    <property type="entry name" value="CdaA"/>
</dbReference>
<dbReference type="InterPro" id="IPR034693">
    <property type="entry name" value="CdaS"/>
</dbReference>
<dbReference type="InterPro" id="IPR050338">
    <property type="entry name" value="DisA"/>
</dbReference>
<dbReference type="InterPro" id="IPR036888">
    <property type="entry name" value="DNA_integrity_DisA_N_sf"/>
</dbReference>
<dbReference type="InterPro" id="IPR003390">
    <property type="entry name" value="DNA_integrity_scan_DisA_N"/>
</dbReference>
<dbReference type="NCBIfam" id="NF038327">
    <property type="entry name" value="c-di-AMP_CdaM"/>
    <property type="match status" value="1"/>
</dbReference>
<dbReference type="NCBIfam" id="TIGR00159">
    <property type="entry name" value="diadenylate cyclase CdaA"/>
    <property type="match status" value="1"/>
</dbReference>
<dbReference type="PANTHER" id="PTHR34185">
    <property type="entry name" value="DIADENYLATE CYCLASE"/>
    <property type="match status" value="1"/>
</dbReference>
<dbReference type="PANTHER" id="PTHR34185:SF1">
    <property type="entry name" value="DIADENYLATE CYCLASE"/>
    <property type="match status" value="1"/>
</dbReference>
<dbReference type="Pfam" id="PF02457">
    <property type="entry name" value="DAC"/>
    <property type="match status" value="1"/>
</dbReference>
<dbReference type="PIRSF" id="PIRSF004793">
    <property type="entry name" value="UCP004793"/>
    <property type="match status" value="1"/>
</dbReference>
<dbReference type="SUPFAM" id="SSF143597">
    <property type="entry name" value="YojJ-like"/>
    <property type="match status" value="1"/>
</dbReference>
<dbReference type="PROSITE" id="PS51794">
    <property type="entry name" value="DAC"/>
    <property type="match status" value="1"/>
</dbReference>
<protein>
    <recommendedName>
        <fullName evidence="1">Diadenylate cyclase</fullName>
        <shortName evidence="1">DAC</shortName>
        <ecNumber evidence="1">2.7.7.85</ecNumber>
    </recommendedName>
    <alternativeName>
        <fullName evidence="1">Cyclic-di-AMP synthase</fullName>
        <shortName evidence="1">c-di-AMP synthase</shortName>
    </alternativeName>
    <alternativeName>
        <fullName evidence="3">Diadenylyl cyclase</fullName>
    </alternativeName>
</protein>
<name>DACB_MYCGE</name>
<reference key="1">
    <citation type="journal article" date="1995" name="Science">
        <title>The minimal gene complement of Mycoplasma genitalium.</title>
        <authorList>
            <person name="Fraser C.M."/>
            <person name="Gocayne J.D."/>
            <person name="White O."/>
            <person name="Adams M.D."/>
            <person name="Clayton R.A."/>
            <person name="Fleischmann R.D."/>
            <person name="Bult C.J."/>
            <person name="Kerlavage A.R."/>
            <person name="Sutton G.G."/>
            <person name="Kelley J.M."/>
            <person name="Fritchman J.L."/>
            <person name="Weidman J.F."/>
            <person name="Small K.V."/>
            <person name="Sandusky M."/>
            <person name="Fuhrmann J.L."/>
            <person name="Nguyen D.T."/>
            <person name="Utterback T.R."/>
            <person name="Saudek D.M."/>
            <person name="Phillips C.A."/>
            <person name="Merrick J.M."/>
            <person name="Tomb J.-F."/>
            <person name="Dougherty B.A."/>
            <person name="Bott K.F."/>
            <person name="Hu P.-C."/>
            <person name="Lucier T.S."/>
            <person name="Peterson S.N."/>
            <person name="Smith H.O."/>
            <person name="Hutchison C.A. III"/>
            <person name="Venter J.C."/>
        </authorList>
    </citation>
    <scope>NUCLEOTIDE SEQUENCE [LARGE SCALE GENOMIC DNA]</scope>
    <source>
        <strain>ATCC 33530 / DSM 19775 / NCTC 10195 / G37</strain>
    </source>
</reference>
<reference key="2">
    <citation type="journal article" date="2013" name="Nat. Rev. Microbiol.">
        <title>Cyclic di-AMP: another second messenger enters the fray.</title>
        <authorList>
            <person name="Corrigan R.M."/>
            <person name="Gruendling A."/>
        </authorList>
    </citation>
    <scope>GENE NAME</scope>
</reference>
<reference key="3">
    <citation type="journal article" date="2006" name="Proc. Natl. Acad. Sci. U.S.A.">
        <title>Essential genes of a minimal bacterium.</title>
        <authorList>
            <person name="Glass J.I."/>
            <person name="Assad-Garcia N."/>
            <person name="Alperovich N."/>
            <person name="Yooseph S."/>
            <person name="Lewis M.R."/>
            <person name="Maruf M."/>
            <person name="Hutchison C.A. III"/>
            <person name="Smith H.O."/>
            <person name="Venter J.C."/>
        </authorList>
    </citation>
    <scope>SEQUENCE REVISION TO 84</scope>
    <scope>DISRUPTION PHENOTYPE</scope>
    <source>
        <strain>ATCC 33530 / DSM 19775 / NCTC 10195 / G37</strain>
    </source>
</reference>
<gene>
    <name evidence="1 3" type="primary">dacB</name>
    <name type="ordered locus">MG105</name>
</gene>
<organism>
    <name type="scientific">Mycoplasma genitalium (strain ATCC 33530 / DSM 19775 / NCTC 10195 / G37)</name>
    <name type="common">Mycoplasmoides genitalium</name>
    <dbReference type="NCBI Taxonomy" id="243273"/>
    <lineage>
        <taxon>Bacteria</taxon>
        <taxon>Bacillati</taxon>
        <taxon>Mycoplasmatota</taxon>
        <taxon>Mycoplasmoidales</taxon>
        <taxon>Mycoplasmoidaceae</taxon>
        <taxon>Mycoplasmoides</taxon>
    </lineage>
</organism>
<evidence type="ECO:0000255" key="1">
    <source>
        <dbReference type="HAMAP-Rule" id="MF_00838"/>
    </source>
</evidence>
<evidence type="ECO:0000269" key="2">
    <source>
    </source>
</evidence>
<evidence type="ECO:0000303" key="3">
    <source>
    </source>
</evidence>
<comment type="function">
    <text evidence="1">Catalyzes the condensation of 2 ATP molecules into cyclic di-AMP (c-di-AMP), a second messenger used to regulate differing processes in different bacteria.</text>
</comment>
<comment type="catalytic activity">
    <reaction evidence="1">
        <text>2 ATP = 3',3'-c-di-AMP + 2 diphosphate</text>
        <dbReference type="Rhea" id="RHEA:35655"/>
        <dbReference type="ChEBI" id="CHEBI:30616"/>
        <dbReference type="ChEBI" id="CHEBI:33019"/>
        <dbReference type="ChEBI" id="CHEBI:71500"/>
        <dbReference type="EC" id="2.7.7.85"/>
    </reaction>
</comment>
<comment type="subunit">
    <text evidence="1">Probably oligomerizes.</text>
</comment>
<comment type="subcellular location">
    <subcellularLocation>
        <location evidence="1">Cell membrane</location>
        <topology evidence="1">Single-pass membrane protein</topology>
    </subcellularLocation>
</comment>
<comment type="disruption phenotype">
    <text evidence="2">Probably essential, it was not disrupted in a global transposon mutagenesis study.</text>
</comment>
<comment type="similarity">
    <text evidence="1">Belongs to the adenylate cyclase family. DacB/CdaS subfamily.</text>
</comment>
<accession>P47351</accession>